<feature type="chain" id="PRO_0000438470" description="Cyclin-dependent protein kinase inhibitor SMR11">
    <location>
        <begin position="1"/>
        <end position="154"/>
    </location>
</feature>
<feature type="region of interest" description="Disordered" evidence="1">
    <location>
        <begin position="1"/>
        <end position="44"/>
    </location>
</feature>
<feature type="compositionally biased region" description="Low complexity" evidence="1">
    <location>
        <begin position="27"/>
        <end position="38"/>
    </location>
</feature>
<feature type="sequence conflict" description="In Ref. 4; AAM65115." evidence="6" ref="4">
    <original>D</original>
    <variation>G</variation>
    <location>
        <position position="28"/>
    </location>
</feature>
<proteinExistence type="evidence at protein level"/>
<protein>
    <recommendedName>
        <fullName evidence="4 5">Cyclin-dependent protein kinase inhibitor SMR11</fullName>
    </recommendedName>
    <alternativeName>
        <fullName evidence="4 5">Protein SIAMESE-RELATED 11</fullName>
    </alternativeName>
</protein>
<accession>Q9SKN7</accession>
<accession>Q8LAW0</accession>
<name>SMR11_ARATH</name>
<organism>
    <name type="scientific">Arabidopsis thaliana</name>
    <name type="common">Mouse-ear cress</name>
    <dbReference type="NCBI Taxonomy" id="3702"/>
    <lineage>
        <taxon>Eukaryota</taxon>
        <taxon>Viridiplantae</taxon>
        <taxon>Streptophyta</taxon>
        <taxon>Embryophyta</taxon>
        <taxon>Tracheophyta</taxon>
        <taxon>Spermatophyta</taxon>
        <taxon>Magnoliopsida</taxon>
        <taxon>eudicotyledons</taxon>
        <taxon>Gunneridae</taxon>
        <taxon>Pentapetalae</taxon>
        <taxon>rosids</taxon>
        <taxon>malvids</taxon>
        <taxon>Brassicales</taxon>
        <taxon>Brassicaceae</taxon>
        <taxon>Camelineae</taxon>
        <taxon>Arabidopsis</taxon>
    </lineage>
</organism>
<gene>
    <name evidence="4 5" type="primary">SMR11</name>
    <name evidence="7" type="ordered locus">At2g28330</name>
    <name evidence="8" type="ORF">T1B3.15</name>
</gene>
<comment type="function">
    <text evidence="3">Probable cyclin-dependent protein kinase (CDK) inhibitor that functions as a repressor of mitosis in the endoreduplication cell cycle.</text>
</comment>
<comment type="subunit">
    <text evidence="2">Interacts with CYCB2-4 (PubMed:20706207).</text>
</comment>
<keyword id="KW-0131">Cell cycle</keyword>
<keyword id="KW-0649">Protein kinase inhibitor</keyword>
<keyword id="KW-1185">Reference proteome</keyword>
<reference key="1">
    <citation type="journal article" date="1999" name="Nature">
        <title>Sequence and analysis of chromosome 2 of the plant Arabidopsis thaliana.</title>
        <authorList>
            <person name="Lin X."/>
            <person name="Kaul S."/>
            <person name="Rounsley S.D."/>
            <person name="Shea T.P."/>
            <person name="Benito M.-I."/>
            <person name="Town C.D."/>
            <person name="Fujii C.Y."/>
            <person name="Mason T.M."/>
            <person name="Bowman C.L."/>
            <person name="Barnstead M.E."/>
            <person name="Feldblyum T.V."/>
            <person name="Buell C.R."/>
            <person name="Ketchum K.A."/>
            <person name="Lee J.J."/>
            <person name="Ronning C.M."/>
            <person name="Koo H.L."/>
            <person name="Moffat K.S."/>
            <person name="Cronin L.A."/>
            <person name="Shen M."/>
            <person name="Pai G."/>
            <person name="Van Aken S."/>
            <person name="Umayam L."/>
            <person name="Tallon L.J."/>
            <person name="Gill J.E."/>
            <person name="Adams M.D."/>
            <person name="Carrera A.J."/>
            <person name="Creasy T.H."/>
            <person name="Goodman H.M."/>
            <person name="Somerville C.R."/>
            <person name="Copenhaver G.P."/>
            <person name="Preuss D."/>
            <person name="Nierman W.C."/>
            <person name="White O."/>
            <person name="Eisen J.A."/>
            <person name="Salzberg S.L."/>
            <person name="Fraser C.M."/>
            <person name="Venter J.C."/>
        </authorList>
    </citation>
    <scope>NUCLEOTIDE SEQUENCE [LARGE SCALE GENOMIC DNA]</scope>
    <source>
        <strain>cv. Columbia</strain>
    </source>
</reference>
<reference key="2">
    <citation type="journal article" date="2017" name="Plant J.">
        <title>Araport11: a complete reannotation of the Arabidopsis thaliana reference genome.</title>
        <authorList>
            <person name="Cheng C.Y."/>
            <person name="Krishnakumar V."/>
            <person name="Chan A.P."/>
            <person name="Thibaud-Nissen F."/>
            <person name="Schobel S."/>
            <person name="Town C.D."/>
        </authorList>
    </citation>
    <scope>GENOME REANNOTATION</scope>
    <source>
        <strain>cv. Columbia</strain>
    </source>
</reference>
<reference key="3">
    <citation type="submission" date="2006-03" db="EMBL/GenBank/DDBJ databases">
        <title>Arabidopsis ORF clones.</title>
        <authorList>
            <person name="Shinn P."/>
            <person name="Chen H."/>
            <person name="Kim C.J."/>
            <person name="Ecker J.R."/>
        </authorList>
    </citation>
    <scope>NUCLEOTIDE SEQUENCE [LARGE SCALE MRNA]</scope>
    <source>
        <strain>cv. Columbia</strain>
    </source>
</reference>
<reference key="4">
    <citation type="submission" date="2002-03" db="EMBL/GenBank/DDBJ databases">
        <title>Full-length cDNA from Arabidopsis thaliana.</title>
        <authorList>
            <person name="Brover V.V."/>
            <person name="Troukhan M.E."/>
            <person name="Alexandrov N.A."/>
            <person name="Lu Y.-P."/>
            <person name="Flavell R.B."/>
            <person name="Feldmann K.A."/>
        </authorList>
    </citation>
    <scope>NUCLEOTIDE SEQUENCE [LARGE SCALE MRNA]</scope>
</reference>
<reference key="5">
    <citation type="journal article" date="2010" name="Mol. Syst. Biol.">
        <title>Targeted interactomics reveals a complex core cell cycle machinery in Arabidopsis thaliana.</title>
        <authorList>
            <person name="Van Leene J."/>
            <person name="Hollunder J."/>
            <person name="Eeckhout D."/>
            <person name="Persiau G."/>
            <person name="Van De Slijke E."/>
            <person name="Stals H."/>
            <person name="Van Isterdael G."/>
            <person name="Verkest A."/>
            <person name="Neirynck S."/>
            <person name="Buffel Y."/>
            <person name="De Bodt S."/>
            <person name="Maere S."/>
            <person name="Laukens K."/>
            <person name="Pharazyn A."/>
            <person name="Ferreira P.C.G."/>
            <person name="Eloy N."/>
            <person name="Renne C."/>
            <person name="Meyer C."/>
            <person name="Faure J.-D."/>
            <person name="Steinbrenner J."/>
            <person name="Beynon J."/>
            <person name="Larkin J.C."/>
            <person name="Van de Peer Y."/>
            <person name="Hilson P."/>
            <person name="Kuiper M."/>
            <person name="De Veylder L."/>
            <person name="Van Onckelen H."/>
            <person name="Inze D."/>
            <person name="Witters E."/>
            <person name="De Jaeger G."/>
        </authorList>
    </citation>
    <scope>INTERACTION WITH CYCB2-4</scope>
</reference>
<reference key="6">
    <citation type="journal article" date="2014" name="Plant Cell">
        <title>The Arabidopsis SIAMESE-RELATED cyclin-dependent kinase inhibitors SMR5 and SMR7 regulate the DNA damage checkpoint in response to reactive oxygen species.</title>
        <authorList>
            <person name="Yi D."/>
            <person name="Alvim Kamei C.L."/>
            <person name="Cools T."/>
            <person name="Vanderauwera S."/>
            <person name="Takahashi N."/>
            <person name="Okushima Y."/>
            <person name="Eekhout T."/>
            <person name="Yoshiyama K.O."/>
            <person name="Larkin J."/>
            <person name="Van den Daele H."/>
            <person name="Conklin P."/>
            <person name="Britt A."/>
            <person name="Umeda M."/>
            <person name="De Veylder L."/>
        </authorList>
    </citation>
    <scope>GENE FAMILY</scope>
    <scope>NOMENCLATURE</scope>
</reference>
<reference key="7">
    <citation type="journal article" date="2015" name="Plant Cell">
        <title>Functional conservation in the SIAMESE-RELATED family of cyclin-dependent kinase inhibitors in land plants.</title>
        <authorList>
            <person name="Kumar N."/>
            <person name="Harashima H."/>
            <person name="Kalve S."/>
            <person name="Bramsiepe J."/>
            <person name="Wang K."/>
            <person name="Sizani B.L."/>
            <person name="Bertrand L.L."/>
            <person name="Johnson M.C."/>
            <person name="Faulk C."/>
            <person name="Dale R."/>
            <person name="Simmons L.A."/>
            <person name="Churchman M.L."/>
            <person name="Sugimoto K."/>
            <person name="Kato N."/>
            <person name="Dasanayake M."/>
            <person name="Beemster G."/>
            <person name="Schnittger A."/>
            <person name="Larkin J.C."/>
        </authorList>
    </citation>
    <scope>FUNCTION</scope>
    <scope>GENE FAMILY</scope>
    <scope>NOMENCLATURE</scope>
</reference>
<evidence type="ECO:0000256" key="1">
    <source>
        <dbReference type="SAM" id="MobiDB-lite"/>
    </source>
</evidence>
<evidence type="ECO:0000269" key="2">
    <source>
    </source>
</evidence>
<evidence type="ECO:0000269" key="3">
    <source>
    </source>
</evidence>
<evidence type="ECO:0000303" key="4">
    <source>
    </source>
</evidence>
<evidence type="ECO:0000303" key="5">
    <source>
    </source>
</evidence>
<evidence type="ECO:0000305" key="6"/>
<evidence type="ECO:0000312" key="7">
    <source>
        <dbReference type="Araport" id="AT2G28330"/>
    </source>
</evidence>
<evidence type="ECO:0000312" key="8">
    <source>
        <dbReference type="EMBL" id="AAD20692.1"/>
    </source>
</evidence>
<sequence length="154" mass="16893">MEQEEPCEAKETASSSIEPKTPNPNVPDSIPAIDSDSSLSEEEIVTEKDRGIVTLSPLCKQRIDSASISDCVLVSDDEIIESLYQNLLRVILSLQQIQSVAVVPEIWCFDGCKTPPPSSRNLDSNMVSDTCPGAPMKLTKISRNIDSGLRRKLF</sequence>
<dbReference type="EMBL" id="AC006283">
    <property type="protein sequence ID" value="AAD20692.1"/>
    <property type="molecule type" value="Genomic_DNA"/>
</dbReference>
<dbReference type="EMBL" id="CP002685">
    <property type="protein sequence ID" value="AEC08108.1"/>
    <property type="molecule type" value="Genomic_DNA"/>
</dbReference>
<dbReference type="EMBL" id="BT024761">
    <property type="protein sequence ID" value="ABD59099.1"/>
    <property type="molecule type" value="mRNA"/>
</dbReference>
<dbReference type="EMBL" id="AY087573">
    <property type="protein sequence ID" value="AAM65115.1"/>
    <property type="molecule type" value="mRNA"/>
</dbReference>
<dbReference type="PIR" id="E84683">
    <property type="entry name" value="E84683"/>
</dbReference>
<dbReference type="RefSeq" id="NP_565669.1">
    <property type="nucleotide sequence ID" value="NM_128392.4"/>
</dbReference>
<dbReference type="FunCoup" id="Q9SKN7">
    <property type="interactions" value="5"/>
</dbReference>
<dbReference type="IntAct" id="Q9SKN7">
    <property type="interactions" value="1"/>
</dbReference>
<dbReference type="STRING" id="3702.Q9SKN7"/>
<dbReference type="iPTMnet" id="Q9SKN7"/>
<dbReference type="PaxDb" id="3702-AT2G28330.1"/>
<dbReference type="ProteomicsDB" id="228447"/>
<dbReference type="EnsemblPlants" id="AT2G28330.1">
    <property type="protein sequence ID" value="AT2G28330.1"/>
    <property type="gene ID" value="AT2G28330"/>
</dbReference>
<dbReference type="GeneID" id="817380"/>
<dbReference type="Gramene" id="AT2G28330.1">
    <property type="protein sequence ID" value="AT2G28330.1"/>
    <property type="gene ID" value="AT2G28330"/>
</dbReference>
<dbReference type="KEGG" id="ath:AT2G28330"/>
<dbReference type="Araport" id="AT2G28330"/>
<dbReference type="TAIR" id="AT2G28330">
    <property type="gene designation" value="SMR11"/>
</dbReference>
<dbReference type="eggNOG" id="ENOG502R7KQ">
    <property type="taxonomic scope" value="Eukaryota"/>
</dbReference>
<dbReference type="HOGENOM" id="CLU_163607_0_0_1"/>
<dbReference type="InParanoid" id="Q9SKN7"/>
<dbReference type="OMA" id="GSAETWC"/>
<dbReference type="PhylomeDB" id="Q9SKN7"/>
<dbReference type="PRO" id="PR:Q9SKN7"/>
<dbReference type="Proteomes" id="UP000006548">
    <property type="component" value="Chromosome 2"/>
</dbReference>
<dbReference type="ExpressionAtlas" id="Q9SKN7">
    <property type="expression patterns" value="baseline and differential"/>
</dbReference>
<dbReference type="GO" id="GO:0004860">
    <property type="term" value="F:protein kinase inhibitor activity"/>
    <property type="evidence" value="ECO:0007669"/>
    <property type="project" value="UniProtKB-KW"/>
</dbReference>
<dbReference type="InterPro" id="IPR038971">
    <property type="entry name" value="SMR11/SMR16"/>
</dbReference>
<dbReference type="PANTHER" id="PTHR36310">
    <property type="entry name" value="CYCLIN-DEPENDENT PROTEIN KINASE INHIBITOR SMR11"/>
    <property type="match status" value="1"/>
</dbReference>
<dbReference type="PANTHER" id="PTHR36310:SF1">
    <property type="entry name" value="CYCLIN-DEPENDENT PROTEIN KINASE INHIBITOR SMR11"/>
    <property type="match status" value="1"/>
</dbReference>